<proteinExistence type="evidence at protein level"/>
<name>GSTF9_ARATH</name>
<protein>
    <recommendedName>
        <fullName evidence="6">Glutathione S-transferase F9</fullName>
        <shortName evidence="6">AtGSTF9</shortName>
        <ecNumber evidence="2 3">2.5.1.18</ecNumber>
    </recommendedName>
    <alternativeName>
        <fullName evidence="6">AtGSTF7</fullName>
    </alternativeName>
    <alternativeName>
        <fullName evidence="6 8">GST class-phi member 9</fullName>
    </alternativeName>
</protein>
<organism>
    <name type="scientific">Arabidopsis thaliana</name>
    <name type="common">Mouse-ear cress</name>
    <dbReference type="NCBI Taxonomy" id="3702"/>
    <lineage>
        <taxon>Eukaryota</taxon>
        <taxon>Viridiplantae</taxon>
        <taxon>Streptophyta</taxon>
        <taxon>Embryophyta</taxon>
        <taxon>Tracheophyta</taxon>
        <taxon>Spermatophyta</taxon>
        <taxon>Magnoliopsida</taxon>
        <taxon>eudicotyledons</taxon>
        <taxon>Gunneridae</taxon>
        <taxon>Pentapetalae</taxon>
        <taxon>rosids</taxon>
        <taxon>malvids</taxon>
        <taxon>Brassicales</taxon>
        <taxon>Brassicaceae</taxon>
        <taxon>Camelineae</taxon>
        <taxon>Arabidopsis</taxon>
    </lineage>
</organism>
<gene>
    <name evidence="6" type="primary">GSTF9</name>
    <name type="synonym">GLUTTR</name>
    <name evidence="6" type="synonym">GSTF7</name>
    <name evidence="8" type="synonym">Phi9</name>
    <name evidence="10" type="ordered locus">At2g30860</name>
    <name evidence="11" type="ORF">F7F1.7</name>
</gene>
<comment type="function">
    <text evidence="2 3">In vitro, possesses glutathione S-transferase activity toward 1-chloro-2,4-dinitrobenzene (CDNB) and benzyl isothiocyanate (BITC), and glutathione peroxidase activity toward cumene hydroperoxide and linoleic acid-13-hydroperoxide. May be involved in the conjugation of reduced glutathione to a wide number of exogenous and endogenous hydrophobic electrophiles and have a detoxification role against certain herbicides.</text>
</comment>
<comment type="catalytic activity">
    <reaction evidence="2 3">
        <text>RX + glutathione = an S-substituted glutathione + a halide anion + H(+)</text>
        <dbReference type="Rhea" id="RHEA:16437"/>
        <dbReference type="ChEBI" id="CHEBI:15378"/>
        <dbReference type="ChEBI" id="CHEBI:16042"/>
        <dbReference type="ChEBI" id="CHEBI:17792"/>
        <dbReference type="ChEBI" id="CHEBI:57925"/>
        <dbReference type="ChEBI" id="CHEBI:90779"/>
        <dbReference type="EC" id="2.5.1.18"/>
    </reaction>
</comment>
<comment type="activity regulation">
    <text evidence="5">Redox-regulated enzyme; in oxidative stress conditions methionine oxidation ensure a thermodynamic and structural compensatory mechanism to guarantee H(2)O(2) peroxidase activity despite transferase activity inhibition.</text>
</comment>
<comment type="biophysicochemical properties">
    <kinetics>
        <KM evidence="5">71 uM for glutathione (in oxidative conditions)</KM>
        <KM evidence="5">131 uM for glutathione (in reductive conditions)</KM>
        <KM evidence="5">1.8 mM for 1-chloro-2,4-dinitrobenzene (in oxidative conditions)</KM>
        <KM evidence="5">1.3 mM for 1-chloro-2,4-dinitrobenzene (in reductive conditions)</KM>
        <text evidence="5">kcat is 0.5 sec(-1) with glutathione as substrate (in oxidative conditions) (PubMed:29732642). kcat is 0.85 sec(-1) with glutathione as substrate (in reductive conditions) (PubMed:29732642). kcat is 0.72 sec(-1) with 1-chloro-2,4-dinitrobenzene as substrate (in oxidative conditions) (PubMed:29732642). kcat is 0.98 sec(-1) with 1-chloro-2,4-dinitrobenzene as substrate (in reductive conditions) (PubMed:29732642).</text>
    </kinetics>
</comment>
<comment type="subcellular location">
    <subcellularLocation>
        <location evidence="9">Cytoplasm</location>
        <location evidence="9">Cytosol</location>
    </subcellularLocation>
</comment>
<comment type="alternative products">
    <event type="alternative splicing"/>
    <isoform>
        <id>O80852-1</id>
        <name>1</name>
        <sequence type="displayed"/>
    </isoform>
    <isoform>
        <id>O80852-2</id>
        <name>2</name>
        <sequence type="described" ref="VSP_041938 VSP_041939"/>
    </isoform>
</comment>
<comment type="induction">
    <text evidence="3 4">By zinc in roots and benoxacor.</text>
</comment>
<comment type="PTM">
    <text evidence="5">Oxidated at Met-35, Met-118, Met-123 and Met-184 in oxidative stress conditions (e.g. hydrogen peroxide H(2)O(2)).</text>
</comment>
<comment type="similarity">
    <text evidence="9">Belongs to the GST superfamily. Phi family.</text>
</comment>
<comment type="sequence caution" evidence="9">
    <conflict type="frameshift">
        <sequence resource="EMBL-CDS" id="BAH56998"/>
    </conflict>
</comment>
<reference key="1">
    <citation type="submission" date="1997-04" db="EMBL/GenBank/DDBJ databases">
        <title>Cloning, expression and characterisation of an Arabidopsis glutathione transferase gene.</title>
        <authorList>
            <person name="Jemth P."/>
            <person name="Jiang F."/>
            <person name="Mannervik B."/>
        </authorList>
    </citation>
    <scope>NUCLEOTIDE SEQUENCE [MRNA] (ISOFORM 1)</scope>
    <source>
        <strain>cv. Columbia</strain>
    </source>
</reference>
<reference key="2">
    <citation type="journal article" date="1999" name="Nature">
        <title>Sequence and analysis of chromosome 2 of the plant Arabidopsis thaliana.</title>
        <authorList>
            <person name="Lin X."/>
            <person name="Kaul S."/>
            <person name="Rounsley S.D."/>
            <person name="Shea T.P."/>
            <person name="Benito M.-I."/>
            <person name="Town C.D."/>
            <person name="Fujii C.Y."/>
            <person name="Mason T.M."/>
            <person name="Bowman C.L."/>
            <person name="Barnstead M.E."/>
            <person name="Feldblyum T.V."/>
            <person name="Buell C.R."/>
            <person name="Ketchum K.A."/>
            <person name="Lee J.J."/>
            <person name="Ronning C.M."/>
            <person name="Koo H.L."/>
            <person name="Moffat K.S."/>
            <person name="Cronin L.A."/>
            <person name="Shen M."/>
            <person name="Pai G."/>
            <person name="Van Aken S."/>
            <person name="Umayam L."/>
            <person name="Tallon L.J."/>
            <person name="Gill J.E."/>
            <person name="Adams M.D."/>
            <person name="Carrera A.J."/>
            <person name="Creasy T.H."/>
            <person name="Goodman H.M."/>
            <person name="Somerville C.R."/>
            <person name="Copenhaver G.P."/>
            <person name="Preuss D."/>
            <person name="Nierman W.C."/>
            <person name="White O."/>
            <person name="Eisen J.A."/>
            <person name="Salzberg S.L."/>
            <person name="Fraser C.M."/>
            <person name="Venter J.C."/>
        </authorList>
    </citation>
    <scope>NUCLEOTIDE SEQUENCE [LARGE SCALE GENOMIC DNA]</scope>
    <source>
        <strain>cv. Columbia</strain>
    </source>
</reference>
<reference key="3">
    <citation type="journal article" date="2017" name="Plant J.">
        <title>Araport11: a complete reannotation of the Arabidopsis thaliana reference genome.</title>
        <authorList>
            <person name="Cheng C.Y."/>
            <person name="Krishnakumar V."/>
            <person name="Chan A.P."/>
            <person name="Thibaud-Nissen F."/>
            <person name="Schobel S."/>
            <person name="Town C.D."/>
        </authorList>
    </citation>
    <scope>GENOME REANNOTATION</scope>
    <source>
        <strain>cv. Columbia</strain>
    </source>
</reference>
<reference key="4">
    <citation type="journal article" date="2003" name="Science">
        <title>Empirical analysis of transcriptional activity in the Arabidopsis genome.</title>
        <authorList>
            <person name="Yamada K."/>
            <person name="Lim J."/>
            <person name="Dale J.M."/>
            <person name="Chen H."/>
            <person name="Shinn P."/>
            <person name="Palm C.J."/>
            <person name="Southwick A.M."/>
            <person name="Wu H.C."/>
            <person name="Kim C.J."/>
            <person name="Nguyen M."/>
            <person name="Pham P.K."/>
            <person name="Cheuk R.F."/>
            <person name="Karlin-Newmann G."/>
            <person name="Liu S.X."/>
            <person name="Lam B."/>
            <person name="Sakano H."/>
            <person name="Wu T."/>
            <person name="Yu G."/>
            <person name="Miranda M."/>
            <person name="Quach H.L."/>
            <person name="Tripp M."/>
            <person name="Chang C.H."/>
            <person name="Lee J.M."/>
            <person name="Toriumi M.J."/>
            <person name="Chan M.M."/>
            <person name="Tang C.C."/>
            <person name="Onodera C.S."/>
            <person name="Deng J.M."/>
            <person name="Akiyama K."/>
            <person name="Ansari Y."/>
            <person name="Arakawa T."/>
            <person name="Banh J."/>
            <person name="Banno F."/>
            <person name="Bowser L."/>
            <person name="Brooks S.Y."/>
            <person name="Carninci P."/>
            <person name="Chao Q."/>
            <person name="Choy N."/>
            <person name="Enju A."/>
            <person name="Goldsmith A.D."/>
            <person name="Gurjal M."/>
            <person name="Hansen N.F."/>
            <person name="Hayashizaki Y."/>
            <person name="Johnson-Hopson C."/>
            <person name="Hsuan V.W."/>
            <person name="Iida K."/>
            <person name="Karnes M."/>
            <person name="Khan S."/>
            <person name="Koesema E."/>
            <person name="Ishida J."/>
            <person name="Jiang P.X."/>
            <person name="Jones T."/>
            <person name="Kawai J."/>
            <person name="Kamiya A."/>
            <person name="Meyers C."/>
            <person name="Nakajima M."/>
            <person name="Narusaka M."/>
            <person name="Seki M."/>
            <person name="Sakurai T."/>
            <person name="Satou M."/>
            <person name="Tamse R."/>
            <person name="Vaysberg M."/>
            <person name="Wallender E.K."/>
            <person name="Wong C."/>
            <person name="Yamamura Y."/>
            <person name="Yuan S."/>
            <person name="Shinozaki K."/>
            <person name="Davis R.W."/>
            <person name="Theologis A."/>
            <person name="Ecker J.R."/>
        </authorList>
    </citation>
    <scope>NUCLEOTIDE SEQUENCE [LARGE SCALE MRNA] (ISOFORM 1)</scope>
    <source>
        <strain>cv. Columbia</strain>
    </source>
</reference>
<reference key="5">
    <citation type="journal article" date="2009" name="DNA Res.">
        <title>Analysis of multiple occurrences of alternative splicing events in Arabidopsis thaliana using novel sequenced full-length cDNAs.</title>
        <authorList>
            <person name="Iida K."/>
            <person name="Fukami-Kobayashi K."/>
            <person name="Toyoda A."/>
            <person name="Sakaki Y."/>
            <person name="Kobayashi M."/>
            <person name="Seki M."/>
            <person name="Shinozaki K."/>
        </authorList>
    </citation>
    <scope>NUCLEOTIDE SEQUENCE [LARGE SCALE MRNA] (ISOFORM 2)</scope>
    <source>
        <strain>cv. Columbia</strain>
        <tissue>Rosette leaf</tissue>
    </source>
</reference>
<reference key="6">
    <citation type="journal article" date="2002" name="Plant Mol. Biol.">
        <title>Probing the diversity of the Arabidopsis glutathione S-transferase gene family.</title>
        <authorList>
            <person name="Wagner U."/>
            <person name="Edwards R."/>
            <person name="Dixon D.P."/>
            <person name="Mauch F."/>
        </authorList>
    </citation>
    <scope>FUNCTION</scope>
    <scope>CATALYTIC ACTIVITY</scope>
    <scope>GENE FAMILY</scope>
    <scope>NOMENCLATURE</scope>
    <source>
        <strain>cv. Columbia</strain>
    </source>
</reference>
<reference key="7">
    <citation type="journal article" date="2006" name="Plant Cell Rep.">
        <title>Characterization of two Arabidopsis thaliana glutathione S-transferases.</title>
        <authorList>
            <person name="Nutricati E."/>
            <person name="Miceli A."/>
            <person name="Blando F."/>
            <person name="De Bellis L."/>
        </authorList>
    </citation>
    <scope>FUNCTION</scope>
    <scope>CATALYTIC ACTIVITY</scope>
    <scope>INDUCTION</scope>
</reference>
<reference key="8">
    <citation type="journal article" date="2009" name="Plant Cell Physiol.">
        <title>Identification of zinc-responsive proteins in the roots of Arabidopsis thaliana using a highly improved method of two-dimensional electrophoresis.</title>
        <authorList>
            <person name="Fukao Y."/>
            <person name="Ferjani A."/>
            <person name="Fujiwara M."/>
            <person name="Nishimori Y."/>
            <person name="Ohtsu I."/>
        </authorList>
    </citation>
    <scope>INDUCTION BY ZINC</scope>
</reference>
<reference key="9">
    <citation type="journal article" date="2009" name="Plant Physiol.">
        <title>Large-scale Arabidopsis phosphoproteome profiling reveals novel chloroplast kinase substrates and phosphorylation networks.</title>
        <authorList>
            <person name="Reiland S."/>
            <person name="Messerli G."/>
            <person name="Baerenfaller K."/>
            <person name="Gerrits B."/>
            <person name="Endler A."/>
            <person name="Grossmann J."/>
            <person name="Gruissem W."/>
            <person name="Baginsky S."/>
        </authorList>
    </citation>
    <scope>PHOSPHORYLATION [LARGE SCALE ANALYSIS] AT SER-12</scope>
    <scope>IDENTIFICATION BY MASS SPECTROMETRY [LARGE SCALE ANALYSIS]</scope>
</reference>
<reference key="10">
    <citation type="journal article" date="2019" name="Protein Sci.">
        <title>Redox-regulated methionine oxidation of Arabidopsis thaliana glutathione transferase Phi9 induces H-site flexibility.</title>
        <authorList>
            <person name="Tossounian M.-A."/>
            <person name="Wahni K."/>
            <person name="Van Molle I."/>
            <person name="Vertommen D."/>
            <person name="Astolfi Rosado L."/>
            <person name="Messens J."/>
        </authorList>
    </citation>
    <scope>X-RAY CRYSTALLOGRAPHY (2.20 ANGSTROMS) IN COMPLEX WITH GLUTATHIONE</scope>
    <scope>ACTIVITY REGULATION</scope>
    <scope>PTM</scope>
    <scope>BIOPHYSICOCHEMICAL PROPERTIES</scope>
    <scope>OXIDATION AT MET-35; MET-118; MET-123 AND MET-184</scope>
</reference>
<keyword id="KW-0002">3D-structure</keyword>
<keyword id="KW-0025">Alternative splicing</keyword>
<keyword id="KW-0963">Cytoplasm</keyword>
<keyword id="KW-0216">Detoxification</keyword>
<keyword id="KW-0558">Oxidation</keyword>
<keyword id="KW-0560">Oxidoreductase</keyword>
<keyword id="KW-0575">Peroxidase</keyword>
<keyword id="KW-0597">Phosphoprotein</keyword>
<keyword id="KW-1185">Reference proteome</keyword>
<keyword id="KW-0346">Stress response</keyword>
<keyword id="KW-0808">Transferase</keyword>
<evidence type="ECO:0000255" key="1"/>
<evidence type="ECO:0000269" key="2">
    <source>
    </source>
</evidence>
<evidence type="ECO:0000269" key="3">
    <source>
    </source>
</evidence>
<evidence type="ECO:0000269" key="4">
    <source>
    </source>
</evidence>
<evidence type="ECO:0000269" key="5">
    <source>
    </source>
</evidence>
<evidence type="ECO:0000303" key="6">
    <source>
    </source>
</evidence>
<evidence type="ECO:0000303" key="7">
    <source>
    </source>
</evidence>
<evidence type="ECO:0000303" key="8">
    <source>
    </source>
</evidence>
<evidence type="ECO:0000305" key="9"/>
<evidence type="ECO:0000312" key="10">
    <source>
        <dbReference type="Araport" id="AT2G30860"/>
    </source>
</evidence>
<evidence type="ECO:0000312" key="11">
    <source>
        <dbReference type="EMBL" id="AAC20720.1"/>
    </source>
</evidence>
<evidence type="ECO:0007744" key="12">
    <source>
        <dbReference type="PDB" id="6EZY"/>
    </source>
</evidence>
<evidence type="ECO:0007744" key="13">
    <source>
        <dbReference type="PDB" id="6F01"/>
    </source>
</evidence>
<evidence type="ECO:0007744" key="14">
    <source>
        <dbReference type="PDB" id="6F05"/>
    </source>
</evidence>
<evidence type="ECO:0007744" key="15">
    <source>
    </source>
</evidence>
<evidence type="ECO:0007829" key="16">
    <source>
        <dbReference type="PDB" id="6EZY"/>
    </source>
</evidence>
<evidence type="ECO:0007829" key="17">
    <source>
        <dbReference type="PDB" id="6F05"/>
    </source>
</evidence>
<feature type="chain" id="PRO_0000413544" description="Glutathione S-transferase F9">
    <location>
        <begin position="1"/>
        <end position="215"/>
    </location>
</feature>
<feature type="domain" description="GST N-terminal" evidence="1">
    <location>
        <begin position="2"/>
        <end position="81"/>
    </location>
</feature>
<feature type="domain" description="GST C-terminal" evidence="1">
    <location>
        <begin position="88"/>
        <end position="215"/>
    </location>
</feature>
<feature type="binding site" evidence="5 12 13 14">
    <location>
        <begin position="11"/>
        <end position="12"/>
    </location>
    <ligand>
        <name>glutathione</name>
        <dbReference type="ChEBI" id="CHEBI:57925"/>
    </ligand>
</feature>
<feature type="binding site" evidence="5 12 13 14">
    <location>
        <begin position="39"/>
        <end position="40"/>
    </location>
    <ligand>
        <name>glutathione</name>
        <dbReference type="ChEBI" id="CHEBI:57925"/>
    </ligand>
</feature>
<feature type="binding site" evidence="5 12 13 14">
    <location>
        <begin position="52"/>
        <end position="53"/>
    </location>
    <ligand>
        <name>glutathione</name>
        <dbReference type="ChEBI" id="CHEBI:57925"/>
    </ligand>
</feature>
<feature type="binding site" evidence="5 12 13 14">
    <location>
        <begin position="65"/>
        <end position="66"/>
    </location>
    <ligand>
        <name>glutathione</name>
        <dbReference type="ChEBI" id="CHEBI:57925"/>
    </ligand>
</feature>
<feature type="modified residue" description="Phosphoserine" evidence="15">
    <location>
        <position position="12"/>
    </location>
</feature>
<feature type="modified residue" description="Methionine sulfoxide" evidence="5">
    <location>
        <position position="35"/>
    </location>
</feature>
<feature type="modified residue" description="Methionine sulfoxide" evidence="5">
    <location>
        <position position="118"/>
    </location>
</feature>
<feature type="modified residue" description="Methionine sulfoxide" evidence="5">
    <location>
        <position position="123"/>
    </location>
</feature>
<feature type="modified residue" description="Methionine sulfoxide" evidence="5">
    <location>
        <position position="184"/>
    </location>
</feature>
<feature type="splice variant" id="VSP_041938" description="In isoform 2." evidence="7">
    <original>KYLAGDFVSLADL</original>
    <variation>NIHSQLKMCSSSW</variation>
    <location>
        <begin position="154"/>
        <end position="166"/>
    </location>
</feature>
<feature type="splice variant" id="VSP_041939" description="In isoform 2." evidence="7">
    <location>
        <begin position="167"/>
        <end position="215"/>
    </location>
</feature>
<feature type="sequence conflict" description="In Ref. 5; BAH56998." evidence="9" ref="5">
    <original>K</original>
    <variation>E</variation>
    <location>
        <position position="87"/>
    </location>
</feature>
<feature type="sequence conflict" description="In Ref. 1; CAA72973." evidence="9" ref="1">
    <original>EAHLS</original>
    <variation>KAQRA</variation>
    <location>
        <begin position="147"/>
        <end position="151"/>
    </location>
</feature>
<feature type="strand" evidence="17">
    <location>
        <begin position="3"/>
        <end position="6"/>
    </location>
</feature>
<feature type="helix" evidence="17">
    <location>
        <begin position="11"/>
        <end position="23"/>
    </location>
</feature>
<feature type="strand" evidence="17">
    <location>
        <begin position="27"/>
        <end position="30"/>
    </location>
</feature>
<feature type="turn" evidence="17">
    <location>
        <begin position="34"/>
        <end position="37"/>
    </location>
</feature>
<feature type="helix" evidence="17">
    <location>
        <begin position="38"/>
        <end position="40"/>
    </location>
</feature>
<feature type="helix" evidence="17">
    <location>
        <begin position="42"/>
        <end position="45"/>
    </location>
</feature>
<feature type="strand" evidence="17">
    <location>
        <begin position="55"/>
        <end position="58"/>
    </location>
</feature>
<feature type="strand" evidence="17">
    <location>
        <begin position="61"/>
        <end position="65"/>
    </location>
</feature>
<feature type="helix" evidence="17">
    <location>
        <begin position="66"/>
        <end position="76"/>
    </location>
</feature>
<feature type="turn" evidence="17">
    <location>
        <begin position="77"/>
        <end position="79"/>
    </location>
</feature>
<feature type="strand" evidence="17">
    <location>
        <begin position="80"/>
        <end position="82"/>
    </location>
</feature>
<feature type="helix" evidence="17">
    <location>
        <begin position="89"/>
        <end position="104"/>
    </location>
</feature>
<feature type="helix" evidence="17">
    <location>
        <begin position="107"/>
        <end position="116"/>
    </location>
</feature>
<feature type="helix" evidence="16">
    <location>
        <begin position="120"/>
        <end position="123"/>
    </location>
</feature>
<feature type="helix" evidence="17">
    <location>
        <begin position="129"/>
        <end position="150"/>
    </location>
</feature>
<feature type="strand" evidence="17">
    <location>
        <begin position="154"/>
        <end position="160"/>
    </location>
</feature>
<feature type="helix" evidence="17">
    <location>
        <begin position="163"/>
        <end position="166"/>
    </location>
</feature>
<feature type="helix" evidence="17">
    <location>
        <begin position="169"/>
        <end position="176"/>
    </location>
</feature>
<feature type="turn" evidence="17">
    <location>
        <begin position="177"/>
        <end position="179"/>
    </location>
</feature>
<feature type="helix" evidence="17">
    <location>
        <begin position="183"/>
        <end position="186"/>
    </location>
</feature>
<feature type="helix" evidence="17">
    <location>
        <begin position="189"/>
        <end position="198"/>
    </location>
</feature>
<feature type="helix" evidence="17">
    <location>
        <begin position="202"/>
        <end position="211"/>
    </location>
</feature>
<dbReference type="EC" id="2.5.1.18" evidence="2 3"/>
<dbReference type="EMBL" id="Y12295">
    <property type="protein sequence ID" value="CAA72973.1"/>
    <property type="molecule type" value="mRNA"/>
</dbReference>
<dbReference type="EMBL" id="AC004669">
    <property type="protein sequence ID" value="AAC20720.1"/>
    <property type="molecule type" value="Genomic_DNA"/>
</dbReference>
<dbReference type="EMBL" id="CP002685">
    <property type="protein sequence ID" value="AEC08448.1"/>
    <property type="molecule type" value="Genomic_DNA"/>
</dbReference>
<dbReference type="EMBL" id="CP002685">
    <property type="protein sequence ID" value="AEC08449.1"/>
    <property type="molecule type" value="Genomic_DNA"/>
</dbReference>
<dbReference type="EMBL" id="AF372905">
    <property type="protein sequence ID" value="AAK49621.1"/>
    <property type="molecule type" value="mRNA"/>
</dbReference>
<dbReference type="EMBL" id="BT002679">
    <property type="protein sequence ID" value="AAO11595.1"/>
    <property type="molecule type" value="mRNA"/>
</dbReference>
<dbReference type="EMBL" id="AK318883">
    <property type="protein sequence ID" value="BAH56998.1"/>
    <property type="status" value="ALT_FRAME"/>
    <property type="molecule type" value="mRNA"/>
</dbReference>
<dbReference type="PIR" id="E84713">
    <property type="entry name" value="E84713"/>
</dbReference>
<dbReference type="RefSeq" id="NP_001077983.1">
    <molecule id="O80852-2"/>
    <property type="nucleotide sequence ID" value="NM_001084514.1"/>
</dbReference>
<dbReference type="RefSeq" id="NP_180643.1">
    <molecule id="O80852-1"/>
    <property type="nucleotide sequence ID" value="NM_128638.3"/>
</dbReference>
<dbReference type="PDB" id="6EZY">
    <property type="method" value="X-ray"/>
    <property type="resolution" value="2.35 A"/>
    <property type="chains" value="A/B=1-215"/>
</dbReference>
<dbReference type="PDB" id="6F01">
    <property type="method" value="X-ray"/>
    <property type="resolution" value="2.50 A"/>
    <property type="chains" value="A/B=1-215"/>
</dbReference>
<dbReference type="PDB" id="6F05">
    <property type="method" value="X-ray"/>
    <property type="resolution" value="2.20 A"/>
    <property type="chains" value="A/B/C/D/E/F/G/H/I/J=1-215"/>
</dbReference>
<dbReference type="PDBsum" id="6EZY"/>
<dbReference type="PDBsum" id="6F01"/>
<dbReference type="PDBsum" id="6F05"/>
<dbReference type="SMR" id="O80852"/>
<dbReference type="BioGRID" id="2985">
    <property type="interactions" value="1"/>
</dbReference>
<dbReference type="FunCoup" id="O80852">
    <property type="interactions" value="1056"/>
</dbReference>
<dbReference type="IntAct" id="O80852">
    <property type="interactions" value="1"/>
</dbReference>
<dbReference type="STRING" id="3702.O80852"/>
<dbReference type="iPTMnet" id="O80852"/>
<dbReference type="MetOSite" id="O80852"/>
<dbReference type="PaxDb" id="3702-AT2G30860.1"/>
<dbReference type="ProteomicsDB" id="247330">
    <molecule id="O80852-1"/>
</dbReference>
<dbReference type="EnsemblPlants" id="AT2G30860.1">
    <molecule id="O80852-1"/>
    <property type="protein sequence ID" value="AT2G30860.1"/>
    <property type="gene ID" value="AT2G30860"/>
</dbReference>
<dbReference type="EnsemblPlants" id="AT2G30860.2">
    <molecule id="O80852-2"/>
    <property type="protein sequence ID" value="AT2G30860.2"/>
    <property type="gene ID" value="AT2G30860"/>
</dbReference>
<dbReference type="GeneID" id="817636"/>
<dbReference type="Gramene" id="AT2G30860.1">
    <molecule id="O80852-1"/>
    <property type="protein sequence ID" value="AT2G30860.1"/>
    <property type="gene ID" value="AT2G30860"/>
</dbReference>
<dbReference type="Gramene" id="AT2G30860.2">
    <molecule id="O80852-2"/>
    <property type="protein sequence ID" value="AT2G30860.2"/>
    <property type="gene ID" value="AT2G30860"/>
</dbReference>
<dbReference type="KEGG" id="ath:AT2G30860"/>
<dbReference type="Araport" id="AT2G30860"/>
<dbReference type="TAIR" id="AT2G30860">
    <property type="gene designation" value="GSTF9"/>
</dbReference>
<dbReference type="eggNOG" id="KOG0867">
    <property type="taxonomic scope" value="Eukaryota"/>
</dbReference>
<dbReference type="HOGENOM" id="CLU_011226_5_1_1"/>
<dbReference type="InParanoid" id="O80852"/>
<dbReference type="OMA" id="TFMRSQW"/>
<dbReference type="OrthoDB" id="422574at2759"/>
<dbReference type="PhylomeDB" id="O80852"/>
<dbReference type="SABIO-RK" id="O80852"/>
<dbReference type="CD-CODE" id="4299E36E">
    <property type="entry name" value="Nucleolus"/>
</dbReference>
<dbReference type="PRO" id="PR:O80852"/>
<dbReference type="Proteomes" id="UP000006548">
    <property type="component" value="Chromosome 2"/>
</dbReference>
<dbReference type="ExpressionAtlas" id="O80852">
    <property type="expression patterns" value="baseline and differential"/>
</dbReference>
<dbReference type="GO" id="GO:0048046">
    <property type="term" value="C:apoplast"/>
    <property type="evidence" value="ECO:0007005"/>
    <property type="project" value="TAIR"/>
</dbReference>
<dbReference type="GO" id="GO:0009507">
    <property type="term" value="C:chloroplast"/>
    <property type="evidence" value="ECO:0007005"/>
    <property type="project" value="TAIR"/>
</dbReference>
<dbReference type="GO" id="GO:0009570">
    <property type="term" value="C:chloroplast stroma"/>
    <property type="evidence" value="ECO:0007005"/>
    <property type="project" value="TAIR"/>
</dbReference>
<dbReference type="GO" id="GO:0005737">
    <property type="term" value="C:cytoplasm"/>
    <property type="evidence" value="ECO:0000303"/>
    <property type="project" value="TAIR"/>
</dbReference>
<dbReference type="GO" id="GO:0005829">
    <property type="term" value="C:cytosol"/>
    <property type="evidence" value="ECO:0007005"/>
    <property type="project" value="TAIR"/>
</dbReference>
<dbReference type="GO" id="GO:0005777">
    <property type="term" value="C:peroxisome"/>
    <property type="evidence" value="ECO:0007005"/>
    <property type="project" value="TAIR"/>
</dbReference>
<dbReference type="GO" id="GO:0000325">
    <property type="term" value="C:plant-type vacuole"/>
    <property type="evidence" value="ECO:0007005"/>
    <property type="project" value="TAIR"/>
</dbReference>
<dbReference type="GO" id="GO:0005886">
    <property type="term" value="C:plasma membrane"/>
    <property type="evidence" value="ECO:0007005"/>
    <property type="project" value="TAIR"/>
</dbReference>
<dbReference type="GO" id="GO:0009506">
    <property type="term" value="C:plasmodesma"/>
    <property type="evidence" value="ECO:0007005"/>
    <property type="project" value="TAIR"/>
</dbReference>
<dbReference type="GO" id="GO:0009579">
    <property type="term" value="C:thylakoid"/>
    <property type="evidence" value="ECO:0007005"/>
    <property type="project" value="TAIR"/>
</dbReference>
<dbReference type="GO" id="GO:0005507">
    <property type="term" value="F:copper ion binding"/>
    <property type="evidence" value="ECO:0007005"/>
    <property type="project" value="TAIR"/>
</dbReference>
<dbReference type="GO" id="GO:0043295">
    <property type="term" value="F:glutathione binding"/>
    <property type="evidence" value="ECO:0000314"/>
    <property type="project" value="TAIR"/>
</dbReference>
<dbReference type="GO" id="GO:0004602">
    <property type="term" value="F:glutathione peroxidase activity"/>
    <property type="evidence" value="ECO:0000314"/>
    <property type="project" value="TAIR"/>
</dbReference>
<dbReference type="GO" id="GO:0004364">
    <property type="term" value="F:glutathione transferase activity"/>
    <property type="evidence" value="ECO:0000314"/>
    <property type="project" value="TAIR"/>
</dbReference>
<dbReference type="GO" id="GO:1901149">
    <property type="term" value="F:salicylic acid binding"/>
    <property type="evidence" value="ECO:0007005"/>
    <property type="project" value="TAIR"/>
</dbReference>
<dbReference type="GO" id="GO:0006952">
    <property type="term" value="P:defense response"/>
    <property type="evidence" value="ECO:0000270"/>
    <property type="project" value="TAIR"/>
</dbReference>
<dbReference type="GO" id="GO:0046686">
    <property type="term" value="P:response to cadmium ion"/>
    <property type="evidence" value="ECO:0000270"/>
    <property type="project" value="TAIR"/>
</dbReference>
<dbReference type="GO" id="GO:0010043">
    <property type="term" value="P:response to zinc ion"/>
    <property type="evidence" value="ECO:0000270"/>
    <property type="project" value="TAIR"/>
</dbReference>
<dbReference type="GO" id="GO:0009407">
    <property type="term" value="P:toxin catabolic process"/>
    <property type="evidence" value="ECO:0000304"/>
    <property type="project" value="TAIR"/>
</dbReference>
<dbReference type="CDD" id="cd03187">
    <property type="entry name" value="GST_C_Phi"/>
    <property type="match status" value="1"/>
</dbReference>
<dbReference type="CDD" id="cd03053">
    <property type="entry name" value="GST_N_Phi"/>
    <property type="match status" value="1"/>
</dbReference>
<dbReference type="FunFam" id="1.20.1050.10:FF:000004">
    <property type="entry name" value="Glutathione S-transferase F2"/>
    <property type="match status" value="1"/>
</dbReference>
<dbReference type="FunFam" id="3.40.30.10:FF:000016">
    <property type="entry name" value="Glutathione S-transferase F2"/>
    <property type="match status" value="1"/>
</dbReference>
<dbReference type="Gene3D" id="1.20.1050.10">
    <property type="match status" value="1"/>
</dbReference>
<dbReference type="Gene3D" id="3.40.30.10">
    <property type="entry name" value="Glutaredoxin"/>
    <property type="match status" value="1"/>
</dbReference>
<dbReference type="InterPro" id="IPR010987">
    <property type="entry name" value="Glutathione-S-Trfase_C-like"/>
</dbReference>
<dbReference type="InterPro" id="IPR036282">
    <property type="entry name" value="Glutathione-S-Trfase_C_sf"/>
</dbReference>
<dbReference type="InterPro" id="IPR040079">
    <property type="entry name" value="Glutathione_S-Trfase"/>
</dbReference>
<dbReference type="InterPro" id="IPR004045">
    <property type="entry name" value="Glutathione_S-Trfase_N"/>
</dbReference>
<dbReference type="InterPro" id="IPR004046">
    <property type="entry name" value="GST_C"/>
</dbReference>
<dbReference type="InterPro" id="IPR034347">
    <property type="entry name" value="GST_Phi_C"/>
</dbReference>
<dbReference type="InterPro" id="IPR036249">
    <property type="entry name" value="Thioredoxin-like_sf"/>
</dbReference>
<dbReference type="PANTHER" id="PTHR43900:SF45">
    <property type="entry name" value="GLUTATHIONE S-TRANSFERASE F9"/>
    <property type="match status" value="1"/>
</dbReference>
<dbReference type="PANTHER" id="PTHR43900">
    <property type="entry name" value="GLUTATHIONE S-TRANSFERASE RHO"/>
    <property type="match status" value="1"/>
</dbReference>
<dbReference type="Pfam" id="PF00043">
    <property type="entry name" value="GST_C"/>
    <property type="match status" value="1"/>
</dbReference>
<dbReference type="Pfam" id="PF02798">
    <property type="entry name" value="GST_N"/>
    <property type="match status" value="1"/>
</dbReference>
<dbReference type="SFLD" id="SFLDS00019">
    <property type="entry name" value="Glutathione_Transferase_(cytos"/>
    <property type="match status" value="1"/>
</dbReference>
<dbReference type="SFLD" id="SFLDG00358">
    <property type="entry name" value="Main_(cytGST)"/>
    <property type="match status" value="1"/>
</dbReference>
<dbReference type="SUPFAM" id="SSF47616">
    <property type="entry name" value="GST C-terminal domain-like"/>
    <property type="match status" value="1"/>
</dbReference>
<dbReference type="SUPFAM" id="SSF52833">
    <property type="entry name" value="Thioredoxin-like"/>
    <property type="match status" value="1"/>
</dbReference>
<dbReference type="PROSITE" id="PS50405">
    <property type="entry name" value="GST_CTER"/>
    <property type="match status" value="1"/>
</dbReference>
<dbReference type="PROSITE" id="PS50404">
    <property type="entry name" value="GST_NTER"/>
    <property type="match status" value="1"/>
</dbReference>
<accession>O80852</accession>
<accession>A8MR26</accession>
<accession>C0Z2R9</accession>
<accession>O23626</accession>
<sequence>MVLKVYGPHFASPKRALVTLIEKGVAFETIPVDLMKGEHKQPAYLALQPFGTVPAVVDGDYKIFESRAVMRYVAEKYRSQGPDLLGKTVEDRGQVEQWLDVEATTYHPPLLNLTLHIMFASVMGFPSDEKLIKESEEKLAGVLDVYEAHLSKSKYLAGDFVSLADLAHLPFTDYLVGPIGKAYMIKDRKHVSAWWDDISSRPAWKETVAKYSFPA</sequence>